<proteinExistence type="inferred from homology"/>
<organism>
    <name type="scientific">Schizosaccharomyces pombe (strain 972 / ATCC 24843)</name>
    <name type="common">Fission yeast</name>
    <dbReference type="NCBI Taxonomy" id="284812"/>
    <lineage>
        <taxon>Eukaryota</taxon>
        <taxon>Fungi</taxon>
        <taxon>Dikarya</taxon>
        <taxon>Ascomycota</taxon>
        <taxon>Taphrinomycotina</taxon>
        <taxon>Schizosaccharomycetes</taxon>
        <taxon>Schizosaccharomycetales</taxon>
        <taxon>Schizosaccharomycetaceae</taxon>
        <taxon>Schizosaccharomyces</taxon>
    </lineage>
</organism>
<gene>
    <name type="primary">mrpl16</name>
    <name type="ORF">SPBC1105.03c</name>
</gene>
<reference key="1">
    <citation type="journal article" date="2002" name="Nature">
        <title>The genome sequence of Schizosaccharomyces pombe.</title>
        <authorList>
            <person name="Wood V."/>
            <person name="Gwilliam R."/>
            <person name="Rajandream M.A."/>
            <person name="Lyne M.H."/>
            <person name="Lyne R."/>
            <person name="Stewart A."/>
            <person name="Sgouros J.G."/>
            <person name="Peat N."/>
            <person name="Hayles J."/>
            <person name="Baker S.G."/>
            <person name="Basham D."/>
            <person name="Bowman S."/>
            <person name="Brooks K."/>
            <person name="Brown D."/>
            <person name="Brown S."/>
            <person name="Chillingworth T."/>
            <person name="Churcher C.M."/>
            <person name="Collins M."/>
            <person name="Connor R."/>
            <person name="Cronin A."/>
            <person name="Davis P."/>
            <person name="Feltwell T."/>
            <person name="Fraser A."/>
            <person name="Gentles S."/>
            <person name="Goble A."/>
            <person name="Hamlin N."/>
            <person name="Harris D.E."/>
            <person name="Hidalgo J."/>
            <person name="Hodgson G."/>
            <person name="Holroyd S."/>
            <person name="Hornsby T."/>
            <person name="Howarth S."/>
            <person name="Huckle E.J."/>
            <person name="Hunt S."/>
            <person name="Jagels K."/>
            <person name="James K.D."/>
            <person name="Jones L."/>
            <person name="Jones M."/>
            <person name="Leather S."/>
            <person name="McDonald S."/>
            <person name="McLean J."/>
            <person name="Mooney P."/>
            <person name="Moule S."/>
            <person name="Mungall K.L."/>
            <person name="Murphy L.D."/>
            <person name="Niblett D."/>
            <person name="Odell C."/>
            <person name="Oliver K."/>
            <person name="O'Neil S."/>
            <person name="Pearson D."/>
            <person name="Quail M.A."/>
            <person name="Rabbinowitsch E."/>
            <person name="Rutherford K.M."/>
            <person name="Rutter S."/>
            <person name="Saunders D."/>
            <person name="Seeger K."/>
            <person name="Sharp S."/>
            <person name="Skelton J."/>
            <person name="Simmonds M.N."/>
            <person name="Squares R."/>
            <person name="Squares S."/>
            <person name="Stevens K."/>
            <person name="Taylor K."/>
            <person name="Taylor R.G."/>
            <person name="Tivey A."/>
            <person name="Walsh S.V."/>
            <person name="Warren T."/>
            <person name="Whitehead S."/>
            <person name="Woodward J.R."/>
            <person name="Volckaert G."/>
            <person name="Aert R."/>
            <person name="Robben J."/>
            <person name="Grymonprez B."/>
            <person name="Weltjens I."/>
            <person name="Vanstreels E."/>
            <person name="Rieger M."/>
            <person name="Schaefer M."/>
            <person name="Mueller-Auer S."/>
            <person name="Gabel C."/>
            <person name="Fuchs M."/>
            <person name="Duesterhoeft A."/>
            <person name="Fritzc C."/>
            <person name="Holzer E."/>
            <person name="Moestl D."/>
            <person name="Hilbert H."/>
            <person name="Borzym K."/>
            <person name="Langer I."/>
            <person name="Beck A."/>
            <person name="Lehrach H."/>
            <person name="Reinhardt R."/>
            <person name="Pohl T.M."/>
            <person name="Eger P."/>
            <person name="Zimmermann W."/>
            <person name="Wedler H."/>
            <person name="Wambutt R."/>
            <person name="Purnelle B."/>
            <person name="Goffeau A."/>
            <person name="Cadieu E."/>
            <person name="Dreano S."/>
            <person name="Gloux S."/>
            <person name="Lelaure V."/>
            <person name="Mottier S."/>
            <person name="Galibert F."/>
            <person name="Aves S.J."/>
            <person name="Xiang Z."/>
            <person name="Hunt C."/>
            <person name="Moore K."/>
            <person name="Hurst S.M."/>
            <person name="Lucas M."/>
            <person name="Rochet M."/>
            <person name="Gaillardin C."/>
            <person name="Tallada V.A."/>
            <person name="Garzon A."/>
            <person name="Thode G."/>
            <person name="Daga R.R."/>
            <person name="Cruzado L."/>
            <person name="Jimenez J."/>
            <person name="Sanchez M."/>
            <person name="del Rey F."/>
            <person name="Benito J."/>
            <person name="Dominguez A."/>
            <person name="Revuelta J.L."/>
            <person name="Moreno S."/>
            <person name="Armstrong J."/>
            <person name="Forsburg S.L."/>
            <person name="Cerutti L."/>
            <person name="Lowe T."/>
            <person name="McCombie W.R."/>
            <person name="Paulsen I."/>
            <person name="Potashkin J."/>
            <person name="Shpakovski G.V."/>
            <person name="Ussery D."/>
            <person name="Barrell B.G."/>
            <person name="Nurse P."/>
        </authorList>
    </citation>
    <scope>NUCLEOTIDE SEQUENCE [LARGE SCALE GENOMIC DNA]</scope>
    <source>
        <strain>972 / ATCC 24843</strain>
    </source>
</reference>
<keyword id="KW-0496">Mitochondrion</keyword>
<keyword id="KW-1185">Reference proteome</keyword>
<keyword id="KW-0687">Ribonucleoprotein</keyword>
<keyword id="KW-0689">Ribosomal protein</keyword>
<keyword id="KW-0809">Transit peptide</keyword>
<dbReference type="EMBL" id="CU329671">
    <property type="protein sequence ID" value="CAB50966.1"/>
    <property type="molecule type" value="Genomic_DNA"/>
</dbReference>
<dbReference type="PIR" id="T39280">
    <property type="entry name" value="T39280"/>
</dbReference>
<dbReference type="RefSeq" id="NP_596459.1">
    <property type="nucleotide sequence ID" value="NM_001022378.2"/>
</dbReference>
<dbReference type="SMR" id="Q9Y822"/>
<dbReference type="ComplexPortal" id="CPX-10323">
    <property type="entry name" value="54S mitochondrial large ribosomal subunit"/>
</dbReference>
<dbReference type="FunCoup" id="Q9Y822">
    <property type="interactions" value="54"/>
</dbReference>
<dbReference type="STRING" id="284812.Q9Y822"/>
<dbReference type="iPTMnet" id="Q9Y822"/>
<dbReference type="PaxDb" id="4896-SPBC1105.03c.1"/>
<dbReference type="EnsemblFungi" id="SPBC1105.03c.1">
    <property type="protein sequence ID" value="SPBC1105.03c.1:pep"/>
    <property type="gene ID" value="SPBC1105.03c"/>
</dbReference>
<dbReference type="GeneID" id="2539752"/>
<dbReference type="KEGG" id="spo:2539752"/>
<dbReference type="PomBase" id="SPBC1105.03c">
    <property type="gene designation" value="mrpl16"/>
</dbReference>
<dbReference type="VEuPathDB" id="FungiDB:SPBC1105.03c"/>
<dbReference type="eggNOG" id="KOG3422">
    <property type="taxonomic scope" value="Eukaryota"/>
</dbReference>
<dbReference type="HOGENOM" id="CLU_078858_0_0_1"/>
<dbReference type="InParanoid" id="Q9Y822"/>
<dbReference type="OMA" id="MPGMYEF"/>
<dbReference type="PhylomeDB" id="Q9Y822"/>
<dbReference type="PRO" id="PR:Q9Y822"/>
<dbReference type="Proteomes" id="UP000002485">
    <property type="component" value="Chromosome II"/>
</dbReference>
<dbReference type="GO" id="GO:0005737">
    <property type="term" value="C:cytoplasm"/>
    <property type="evidence" value="ECO:0007005"/>
    <property type="project" value="PomBase"/>
</dbReference>
<dbReference type="GO" id="GO:0005762">
    <property type="term" value="C:mitochondrial large ribosomal subunit"/>
    <property type="evidence" value="ECO:0000318"/>
    <property type="project" value="GO_Central"/>
</dbReference>
<dbReference type="GO" id="GO:0019843">
    <property type="term" value="F:rRNA binding"/>
    <property type="evidence" value="ECO:0000318"/>
    <property type="project" value="GO_Central"/>
</dbReference>
<dbReference type="GO" id="GO:0003735">
    <property type="term" value="F:structural constituent of ribosome"/>
    <property type="evidence" value="ECO:0000318"/>
    <property type="project" value="GO_Central"/>
</dbReference>
<dbReference type="GO" id="GO:0032543">
    <property type="term" value="P:mitochondrial translation"/>
    <property type="evidence" value="ECO:0000318"/>
    <property type="project" value="GO_Central"/>
</dbReference>
<dbReference type="CDD" id="cd01433">
    <property type="entry name" value="Ribosomal_L16_L10e"/>
    <property type="match status" value="1"/>
</dbReference>
<dbReference type="Gene3D" id="3.90.1170.10">
    <property type="entry name" value="Ribosomal protein L10e/L16"/>
    <property type="match status" value="1"/>
</dbReference>
<dbReference type="InterPro" id="IPR047873">
    <property type="entry name" value="Ribosomal_uL16"/>
</dbReference>
<dbReference type="InterPro" id="IPR000114">
    <property type="entry name" value="Ribosomal_uL16_bact-type"/>
</dbReference>
<dbReference type="InterPro" id="IPR020798">
    <property type="entry name" value="Ribosomal_uL16_CS"/>
</dbReference>
<dbReference type="InterPro" id="IPR016180">
    <property type="entry name" value="Ribosomal_uL16_dom"/>
</dbReference>
<dbReference type="InterPro" id="IPR036920">
    <property type="entry name" value="Ribosomal_uL16_sf"/>
</dbReference>
<dbReference type="NCBIfam" id="TIGR01164">
    <property type="entry name" value="rplP_bact"/>
    <property type="match status" value="1"/>
</dbReference>
<dbReference type="PANTHER" id="PTHR12220">
    <property type="entry name" value="50S/60S RIBOSOMAL PROTEIN L16"/>
    <property type="match status" value="1"/>
</dbReference>
<dbReference type="PANTHER" id="PTHR12220:SF13">
    <property type="entry name" value="LARGE RIBOSOMAL SUBUNIT PROTEIN UL16M"/>
    <property type="match status" value="1"/>
</dbReference>
<dbReference type="Pfam" id="PF00252">
    <property type="entry name" value="Ribosomal_L16"/>
    <property type="match status" value="1"/>
</dbReference>
<dbReference type="PRINTS" id="PR00060">
    <property type="entry name" value="RIBOSOMALL16"/>
</dbReference>
<dbReference type="SUPFAM" id="SSF54686">
    <property type="entry name" value="Ribosomal protein L16p/L10e"/>
    <property type="match status" value="1"/>
</dbReference>
<dbReference type="PROSITE" id="PS00701">
    <property type="entry name" value="RIBOSOMAL_L16_2"/>
    <property type="match status" value="1"/>
</dbReference>
<protein>
    <recommendedName>
        <fullName evidence="3">Large ribosomal subunit protein uL16m</fullName>
    </recommendedName>
    <alternativeName>
        <fullName>54S ribosomal protein L16, mitochondrial</fullName>
    </alternativeName>
</protein>
<evidence type="ECO:0000250" key="1">
    <source>
        <dbReference type="UniProtKB" id="P38064"/>
    </source>
</evidence>
<evidence type="ECO:0000255" key="2"/>
<evidence type="ECO:0000305" key="3"/>
<accession>Q9Y822</accession>
<name>RM16_SCHPO</name>
<comment type="function">
    <text evidence="1">Component of the mitochondrial ribosome (mitoribosome), a dedicated translation machinery responsible for the synthesis of mitochondrial genome-encoded proteins, including at least some of the essential transmembrane subunits of the mitochondrial respiratory chain. The mitoribosomes are attached to the mitochondrial inner membrane and translation products are cotranslationally integrated into the membrane.</text>
</comment>
<comment type="subunit">
    <text evidence="1">Component of the mitochondrial large ribosomal subunit (mt-LSU). Mature yeast 74S mitochondrial ribosomes consist of a small (37S) and a large (54S) subunit. The 37S small subunit contains a 15S ribosomal RNA (15S mt-rRNA) and at least 32 different proteins. The 54S large subunit contains a 21S rRNA (21S mt-rRNA) and at least 45 different proteins.</text>
</comment>
<comment type="subcellular location">
    <subcellularLocation>
        <location evidence="1">Mitochondrion</location>
    </subcellularLocation>
</comment>
<comment type="similarity">
    <text evidence="3">Belongs to the universal ribosomal protein uL16 family.</text>
</comment>
<sequence>MALQQYNKFPFFFSGILGPTRLNGLQMPPIQTMVRWGHQYAPRSIRNQKAQKGRVPIPIGGSLRGTQLEWGEYGMRLKDRSIRFHAKQLETAEQILKRILKPIKAARVYTRFCCNVPVCVKGNETRMGKGKGAFEYWAARIPIGRVLFEIGGDGMRKELAEHALKQAAFHLPGKYEIIVKQTPKRLGTTLIHETPITTETSKMNYQEITSTTTAV</sequence>
<feature type="transit peptide" description="Mitochondrion" evidence="2">
    <location>
        <begin position="1"/>
        <end position="36"/>
    </location>
</feature>
<feature type="chain" id="PRO_0000310371" description="Large ribosomal subunit protein uL16m">
    <location>
        <begin position="37"/>
        <end position="215"/>
    </location>
</feature>